<name>KTHY_ALKEH</name>
<accession>Q0A8S2</accession>
<protein>
    <recommendedName>
        <fullName evidence="1">Thymidylate kinase</fullName>
        <ecNumber evidence="1">2.7.4.9</ecNumber>
    </recommendedName>
    <alternativeName>
        <fullName evidence="1">dTMP kinase</fullName>
    </alternativeName>
</protein>
<evidence type="ECO:0000255" key="1">
    <source>
        <dbReference type="HAMAP-Rule" id="MF_00165"/>
    </source>
</evidence>
<gene>
    <name evidence="1" type="primary">tmk</name>
    <name type="ordered locus">Mlg_1416</name>
</gene>
<feature type="chain" id="PRO_1000023141" description="Thymidylate kinase">
    <location>
        <begin position="1"/>
        <end position="217"/>
    </location>
</feature>
<feature type="binding site" evidence="1">
    <location>
        <begin position="11"/>
        <end position="18"/>
    </location>
    <ligand>
        <name>ATP</name>
        <dbReference type="ChEBI" id="CHEBI:30616"/>
    </ligand>
</feature>
<organism>
    <name type="scientific">Alkalilimnicola ehrlichii (strain ATCC BAA-1101 / DSM 17681 / MLHE-1)</name>
    <dbReference type="NCBI Taxonomy" id="187272"/>
    <lineage>
        <taxon>Bacteria</taxon>
        <taxon>Pseudomonadati</taxon>
        <taxon>Pseudomonadota</taxon>
        <taxon>Gammaproteobacteria</taxon>
        <taxon>Chromatiales</taxon>
        <taxon>Ectothiorhodospiraceae</taxon>
        <taxon>Alkalilimnicola</taxon>
    </lineage>
</organism>
<proteinExistence type="inferred from homology"/>
<sequence length="217" mass="24057">MTRGRFITLEGLEGAGKSTALTRVREYLQRQGIDAVMTREPGGTPLGERIRALLLGQSEPPMAPATEALLMFAARSEHLDKRIWPALERGQWVVCDRFTDASYAYQGWGRGLGAERIAALEDWTQGALRPDLTLWLDVPVETGLARAAGRGEAPDRFEQERDGFFERVHEGYAALAERFPERIRRVDAGQPLEAVLTALEEALASAVTRWLSGTEAH</sequence>
<dbReference type="EC" id="2.7.4.9" evidence="1"/>
<dbReference type="EMBL" id="CP000453">
    <property type="protein sequence ID" value="ABI56765.1"/>
    <property type="molecule type" value="Genomic_DNA"/>
</dbReference>
<dbReference type="RefSeq" id="WP_011629160.1">
    <property type="nucleotide sequence ID" value="NC_008340.1"/>
</dbReference>
<dbReference type="SMR" id="Q0A8S2"/>
<dbReference type="KEGG" id="aeh:Mlg_1416"/>
<dbReference type="eggNOG" id="COG0125">
    <property type="taxonomic scope" value="Bacteria"/>
</dbReference>
<dbReference type="HOGENOM" id="CLU_049131_0_2_6"/>
<dbReference type="OrthoDB" id="9774907at2"/>
<dbReference type="Proteomes" id="UP000001962">
    <property type="component" value="Chromosome"/>
</dbReference>
<dbReference type="GO" id="GO:0005829">
    <property type="term" value="C:cytosol"/>
    <property type="evidence" value="ECO:0007669"/>
    <property type="project" value="TreeGrafter"/>
</dbReference>
<dbReference type="GO" id="GO:0005524">
    <property type="term" value="F:ATP binding"/>
    <property type="evidence" value="ECO:0007669"/>
    <property type="project" value="UniProtKB-UniRule"/>
</dbReference>
<dbReference type="GO" id="GO:0004798">
    <property type="term" value="F:dTMP kinase activity"/>
    <property type="evidence" value="ECO:0007669"/>
    <property type="project" value="UniProtKB-UniRule"/>
</dbReference>
<dbReference type="GO" id="GO:0006233">
    <property type="term" value="P:dTDP biosynthetic process"/>
    <property type="evidence" value="ECO:0007669"/>
    <property type="project" value="InterPro"/>
</dbReference>
<dbReference type="GO" id="GO:0006235">
    <property type="term" value="P:dTTP biosynthetic process"/>
    <property type="evidence" value="ECO:0007669"/>
    <property type="project" value="UniProtKB-UniRule"/>
</dbReference>
<dbReference type="GO" id="GO:0006227">
    <property type="term" value="P:dUDP biosynthetic process"/>
    <property type="evidence" value="ECO:0007669"/>
    <property type="project" value="TreeGrafter"/>
</dbReference>
<dbReference type="CDD" id="cd01672">
    <property type="entry name" value="TMPK"/>
    <property type="match status" value="1"/>
</dbReference>
<dbReference type="FunFam" id="3.40.50.300:FF:000225">
    <property type="entry name" value="Thymidylate kinase"/>
    <property type="match status" value="1"/>
</dbReference>
<dbReference type="Gene3D" id="3.40.50.300">
    <property type="entry name" value="P-loop containing nucleotide triphosphate hydrolases"/>
    <property type="match status" value="1"/>
</dbReference>
<dbReference type="HAMAP" id="MF_00165">
    <property type="entry name" value="Thymidylate_kinase"/>
    <property type="match status" value="1"/>
</dbReference>
<dbReference type="InterPro" id="IPR027417">
    <property type="entry name" value="P-loop_NTPase"/>
</dbReference>
<dbReference type="InterPro" id="IPR039430">
    <property type="entry name" value="Thymidylate_kin-like_dom"/>
</dbReference>
<dbReference type="InterPro" id="IPR018094">
    <property type="entry name" value="Thymidylate_kinase"/>
</dbReference>
<dbReference type="NCBIfam" id="TIGR00041">
    <property type="entry name" value="DTMP_kinase"/>
    <property type="match status" value="1"/>
</dbReference>
<dbReference type="PANTHER" id="PTHR10344">
    <property type="entry name" value="THYMIDYLATE KINASE"/>
    <property type="match status" value="1"/>
</dbReference>
<dbReference type="PANTHER" id="PTHR10344:SF4">
    <property type="entry name" value="UMP-CMP KINASE 2, MITOCHONDRIAL"/>
    <property type="match status" value="1"/>
</dbReference>
<dbReference type="Pfam" id="PF02223">
    <property type="entry name" value="Thymidylate_kin"/>
    <property type="match status" value="1"/>
</dbReference>
<dbReference type="SUPFAM" id="SSF52540">
    <property type="entry name" value="P-loop containing nucleoside triphosphate hydrolases"/>
    <property type="match status" value="1"/>
</dbReference>
<reference key="1">
    <citation type="submission" date="2006-08" db="EMBL/GenBank/DDBJ databases">
        <title>Complete sequence of Alkalilimnicola ehrilichei MLHE-1.</title>
        <authorList>
            <person name="Copeland A."/>
            <person name="Lucas S."/>
            <person name="Lapidus A."/>
            <person name="Barry K."/>
            <person name="Detter J.C."/>
            <person name="Glavina del Rio T."/>
            <person name="Hammon N."/>
            <person name="Israni S."/>
            <person name="Dalin E."/>
            <person name="Tice H."/>
            <person name="Pitluck S."/>
            <person name="Sims D."/>
            <person name="Brettin T."/>
            <person name="Bruce D."/>
            <person name="Han C."/>
            <person name="Tapia R."/>
            <person name="Gilna P."/>
            <person name="Schmutz J."/>
            <person name="Larimer F."/>
            <person name="Land M."/>
            <person name="Hauser L."/>
            <person name="Kyrpides N."/>
            <person name="Mikhailova N."/>
            <person name="Oremland R.S."/>
            <person name="Hoeft S.E."/>
            <person name="Switzer-Blum J."/>
            <person name="Kulp T."/>
            <person name="King G."/>
            <person name="Tabita R."/>
            <person name="Witte B."/>
            <person name="Santini J.M."/>
            <person name="Basu P."/>
            <person name="Hollibaugh J.T."/>
            <person name="Xie G."/>
            <person name="Stolz J.F."/>
            <person name="Richardson P."/>
        </authorList>
    </citation>
    <scope>NUCLEOTIDE SEQUENCE [LARGE SCALE GENOMIC DNA]</scope>
    <source>
        <strain>ATCC BAA-1101 / DSM 17681 / MLHE-1</strain>
    </source>
</reference>
<keyword id="KW-0067">ATP-binding</keyword>
<keyword id="KW-0418">Kinase</keyword>
<keyword id="KW-0545">Nucleotide biosynthesis</keyword>
<keyword id="KW-0547">Nucleotide-binding</keyword>
<keyword id="KW-1185">Reference proteome</keyword>
<keyword id="KW-0808">Transferase</keyword>
<comment type="function">
    <text evidence="1">Phosphorylation of dTMP to form dTDP in both de novo and salvage pathways of dTTP synthesis.</text>
</comment>
<comment type="catalytic activity">
    <reaction evidence="1">
        <text>dTMP + ATP = dTDP + ADP</text>
        <dbReference type="Rhea" id="RHEA:13517"/>
        <dbReference type="ChEBI" id="CHEBI:30616"/>
        <dbReference type="ChEBI" id="CHEBI:58369"/>
        <dbReference type="ChEBI" id="CHEBI:63528"/>
        <dbReference type="ChEBI" id="CHEBI:456216"/>
        <dbReference type="EC" id="2.7.4.9"/>
    </reaction>
</comment>
<comment type="similarity">
    <text evidence="1">Belongs to the thymidylate kinase family.</text>
</comment>